<gene>
    <name evidence="1" type="primary">purT</name>
    <name type="ordered locus">AHA_2119</name>
</gene>
<keyword id="KW-0067">ATP-binding</keyword>
<keyword id="KW-0436">Ligase</keyword>
<keyword id="KW-0460">Magnesium</keyword>
<keyword id="KW-0479">Metal-binding</keyword>
<keyword id="KW-0547">Nucleotide-binding</keyword>
<keyword id="KW-0658">Purine biosynthesis</keyword>
<keyword id="KW-1185">Reference proteome</keyword>
<feature type="chain" id="PRO_0000319116" description="Formate-dependent phosphoribosylglycinamide formyltransferase">
    <location>
        <begin position="1"/>
        <end position="392"/>
    </location>
</feature>
<feature type="domain" description="ATP-grasp" evidence="1">
    <location>
        <begin position="117"/>
        <end position="306"/>
    </location>
</feature>
<feature type="binding site" evidence="1">
    <location>
        <begin position="20"/>
        <end position="21"/>
    </location>
    <ligand>
        <name>N(1)-(5-phospho-beta-D-ribosyl)glycinamide</name>
        <dbReference type="ChEBI" id="CHEBI:143788"/>
    </ligand>
</feature>
<feature type="binding site" evidence="1">
    <location>
        <position position="80"/>
    </location>
    <ligand>
        <name>N(1)-(5-phospho-beta-D-ribosyl)glycinamide</name>
        <dbReference type="ChEBI" id="CHEBI:143788"/>
    </ligand>
</feature>
<feature type="binding site" evidence="1">
    <location>
        <position position="112"/>
    </location>
    <ligand>
        <name>ATP</name>
        <dbReference type="ChEBI" id="CHEBI:30616"/>
    </ligand>
</feature>
<feature type="binding site" evidence="1">
    <location>
        <position position="153"/>
    </location>
    <ligand>
        <name>ATP</name>
        <dbReference type="ChEBI" id="CHEBI:30616"/>
    </ligand>
</feature>
<feature type="binding site" evidence="1">
    <location>
        <begin position="158"/>
        <end position="163"/>
    </location>
    <ligand>
        <name>ATP</name>
        <dbReference type="ChEBI" id="CHEBI:30616"/>
    </ligand>
</feature>
<feature type="binding site" evidence="1">
    <location>
        <begin position="193"/>
        <end position="196"/>
    </location>
    <ligand>
        <name>ATP</name>
        <dbReference type="ChEBI" id="CHEBI:30616"/>
    </ligand>
</feature>
<feature type="binding site" evidence="1">
    <location>
        <position position="201"/>
    </location>
    <ligand>
        <name>ATP</name>
        <dbReference type="ChEBI" id="CHEBI:30616"/>
    </ligand>
</feature>
<feature type="binding site" evidence="1">
    <location>
        <position position="265"/>
    </location>
    <ligand>
        <name>Mg(2+)</name>
        <dbReference type="ChEBI" id="CHEBI:18420"/>
    </ligand>
</feature>
<feature type="binding site" evidence="1">
    <location>
        <position position="277"/>
    </location>
    <ligand>
        <name>Mg(2+)</name>
        <dbReference type="ChEBI" id="CHEBI:18420"/>
    </ligand>
</feature>
<feature type="binding site" evidence="1">
    <location>
        <position position="284"/>
    </location>
    <ligand>
        <name>N(1)-(5-phospho-beta-D-ribosyl)glycinamide</name>
        <dbReference type="ChEBI" id="CHEBI:143788"/>
    </ligand>
</feature>
<feature type="binding site" evidence="1">
    <location>
        <position position="355"/>
    </location>
    <ligand>
        <name>N(1)-(5-phospho-beta-D-ribosyl)glycinamide</name>
        <dbReference type="ChEBI" id="CHEBI:143788"/>
    </ligand>
</feature>
<feature type="binding site" evidence="1">
    <location>
        <begin position="362"/>
        <end position="363"/>
    </location>
    <ligand>
        <name>N(1)-(5-phospho-beta-D-ribosyl)glycinamide</name>
        <dbReference type="ChEBI" id="CHEBI:143788"/>
    </ligand>
</feature>
<organism>
    <name type="scientific">Aeromonas hydrophila subsp. hydrophila (strain ATCC 7966 / DSM 30187 / BCRC 13018 / CCUG 14551 / JCM 1027 / KCTC 2358 / NCIMB 9240 / NCTC 8049)</name>
    <dbReference type="NCBI Taxonomy" id="380703"/>
    <lineage>
        <taxon>Bacteria</taxon>
        <taxon>Pseudomonadati</taxon>
        <taxon>Pseudomonadota</taxon>
        <taxon>Gammaproteobacteria</taxon>
        <taxon>Aeromonadales</taxon>
        <taxon>Aeromonadaceae</taxon>
        <taxon>Aeromonas</taxon>
    </lineage>
</organism>
<dbReference type="EC" id="6.3.1.21" evidence="1"/>
<dbReference type="EMBL" id="CP000462">
    <property type="protein sequence ID" value="ABK38146.1"/>
    <property type="molecule type" value="Genomic_DNA"/>
</dbReference>
<dbReference type="RefSeq" id="WP_011705978.1">
    <property type="nucleotide sequence ID" value="NC_008570.1"/>
</dbReference>
<dbReference type="RefSeq" id="YP_856643.1">
    <property type="nucleotide sequence ID" value="NC_008570.1"/>
</dbReference>
<dbReference type="SMR" id="A0KK42"/>
<dbReference type="STRING" id="380703.AHA_2119"/>
<dbReference type="EnsemblBacteria" id="ABK38146">
    <property type="protein sequence ID" value="ABK38146"/>
    <property type="gene ID" value="AHA_2119"/>
</dbReference>
<dbReference type="GeneID" id="4487620"/>
<dbReference type="KEGG" id="aha:AHA_2119"/>
<dbReference type="PATRIC" id="fig|380703.7.peg.2121"/>
<dbReference type="eggNOG" id="COG0027">
    <property type="taxonomic scope" value="Bacteria"/>
</dbReference>
<dbReference type="HOGENOM" id="CLU_011534_1_3_6"/>
<dbReference type="OrthoDB" id="9804625at2"/>
<dbReference type="UniPathway" id="UPA00074">
    <property type="reaction ID" value="UER00127"/>
</dbReference>
<dbReference type="Proteomes" id="UP000000756">
    <property type="component" value="Chromosome"/>
</dbReference>
<dbReference type="GO" id="GO:0005829">
    <property type="term" value="C:cytosol"/>
    <property type="evidence" value="ECO:0007669"/>
    <property type="project" value="TreeGrafter"/>
</dbReference>
<dbReference type="GO" id="GO:0005524">
    <property type="term" value="F:ATP binding"/>
    <property type="evidence" value="ECO:0007669"/>
    <property type="project" value="UniProtKB-UniRule"/>
</dbReference>
<dbReference type="GO" id="GO:0000287">
    <property type="term" value="F:magnesium ion binding"/>
    <property type="evidence" value="ECO:0007669"/>
    <property type="project" value="InterPro"/>
</dbReference>
<dbReference type="GO" id="GO:0043815">
    <property type="term" value="F:phosphoribosylglycinamide formyltransferase 2 activity"/>
    <property type="evidence" value="ECO:0007669"/>
    <property type="project" value="UniProtKB-UniRule"/>
</dbReference>
<dbReference type="GO" id="GO:0004644">
    <property type="term" value="F:phosphoribosylglycinamide formyltransferase activity"/>
    <property type="evidence" value="ECO:0007669"/>
    <property type="project" value="InterPro"/>
</dbReference>
<dbReference type="GO" id="GO:0006189">
    <property type="term" value="P:'de novo' IMP biosynthetic process"/>
    <property type="evidence" value="ECO:0007669"/>
    <property type="project" value="UniProtKB-UniRule"/>
</dbReference>
<dbReference type="FunFam" id="3.30.1490.20:FF:000013">
    <property type="entry name" value="Formate-dependent phosphoribosylglycinamide formyltransferase"/>
    <property type="match status" value="1"/>
</dbReference>
<dbReference type="FunFam" id="3.30.470.20:FF:000027">
    <property type="entry name" value="Formate-dependent phosphoribosylglycinamide formyltransferase"/>
    <property type="match status" value="1"/>
</dbReference>
<dbReference type="FunFam" id="3.40.50.20:FF:000007">
    <property type="entry name" value="Formate-dependent phosphoribosylglycinamide formyltransferase"/>
    <property type="match status" value="1"/>
</dbReference>
<dbReference type="Gene3D" id="3.40.50.20">
    <property type="match status" value="1"/>
</dbReference>
<dbReference type="Gene3D" id="3.30.1490.20">
    <property type="entry name" value="ATP-grasp fold, A domain"/>
    <property type="match status" value="1"/>
</dbReference>
<dbReference type="Gene3D" id="3.30.470.20">
    <property type="entry name" value="ATP-grasp fold, B domain"/>
    <property type="match status" value="1"/>
</dbReference>
<dbReference type="HAMAP" id="MF_01643">
    <property type="entry name" value="PurT"/>
    <property type="match status" value="1"/>
</dbReference>
<dbReference type="InterPro" id="IPR011761">
    <property type="entry name" value="ATP-grasp"/>
</dbReference>
<dbReference type="InterPro" id="IPR003135">
    <property type="entry name" value="ATP-grasp_carboxylate-amine"/>
</dbReference>
<dbReference type="InterPro" id="IPR013815">
    <property type="entry name" value="ATP_grasp_subdomain_1"/>
</dbReference>
<dbReference type="InterPro" id="IPR016185">
    <property type="entry name" value="PreATP-grasp_dom_sf"/>
</dbReference>
<dbReference type="InterPro" id="IPR005862">
    <property type="entry name" value="PurT"/>
</dbReference>
<dbReference type="InterPro" id="IPR054350">
    <property type="entry name" value="PurT/PurK_preATP-grasp"/>
</dbReference>
<dbReference type="InterPro" id="IPR048740">
    <property type="entry name" value="PurT_C"/>
</dbReference>
<dbReference type="InterPro" id="IPR011054">
    <property type="entry name" value="Rudment_hybrid_motif"/>
</dbReference>
<dbReference type="NCBIfam" id="NF006766">
    <property type="entry name" value="PRK09288.1"/>
    <property type="match status" value="1"/>
</dbReference>
<dbReference type="NCBIfam" id="TIGR01142">
    <property type="entry name" value="purT"/>
    <property type="match status" value="1"/>
</dbReference>
<dbReference type="PANTHER" id="PTHR43055">
    <property type="entry name" value="FORMATE-DEPENDENT PHOSPHORIBOSYLGLYCINAMIDE FORMYLTRANSFERASE"/>
    <property type="match status" value="1"/>
</dbReference>
<dbReference type="PANTHER" id="PTHR43055:SF1">
    <property type="entry name" value="FORMATE-DEPENDENT PHOSPHORIBOSYLGLYCINAMIDE FORMYLTRANSFERASE"/>
    <property type="match status" value="1"/>
</dbReference>
<dbReference type="Pfam" id="PF02222">
    <property type="entry name" value="ATP-grasp"/>
    <property type="match status" value="1"/>
</dbReference>
<dbReference type="Pfam" id="PF21244">
    <property type="entry name" value="PurT_C"/>
    <property type="match status" value="1"/>
</dbReference>
<dbReference type="Pfam" id="PF22660">
    <property type="entry name" value="RS_preATP-grasp-like"/>
    <property type="match status" value="1"/>
</dbReference>
<dbReference type="SUPFAM" id="SSF56059">
    <property type="entry name" value="Glutathione synthetase ATP-binding domain-like"/>
    <property type="match status" value="1"/>
</dbReference>
<dbReference type="SUPFAM" id="SSF52440">
    <property type="entry name" value="PreATP-grasp domain"/>
    <property type="match status" value="1"/>
</dbReference>
<dbReference type="SUPFAM" id="SSF51246">
    <property type="entry name" value="Rudiment single hybrid motif"/>
    <property type="match status" value="1"/>
</dbReference>
<dbReference type="PROSITE" id="PS50975">
    <property type="entry name" value="ATP_GRASP"/>
    <property type="match status" value="1"/>
</dbReference>
<proteinExistence type="inferred from homology"/>
<sequence>MFGTATRPGATRALLLGSGELGKEVAIELQRFGIEVIAADRYADAPAMQVAHKAHVLDMLDGAALRALVNEVKPDLIIPELEAIATDTLAALEQEGVKVVPNARATQLTMNREGIRRLAAETLGLPTSPYHFAQSKEEFVAAVDTIGLPCVVKPVMSSSGKGQSVLRDLAKLDESWTHAQEGGRAGRGKVIVEGFVPFEYEITLLTVRAVDGIHFCQPIGHRQEDGDYRESWQPQAMSEQALARSKEVAAKVVEALGGYGLFGVELFIKGDEVWFSEVSPRPHDTGMVTLISQDLSEFALHVRAILGLPVGTITQYGPSASAVVLREGHSQDIRYQGIGEALALVPGAQLRLFGKPEIAGRRRLGVALARAEDCPTAVEQAKAVAARVDVLF</sequence>
<protein>
    <recommendedName>
        <fullName evidence="1">Formate-dependent phosphoribosylglycinamide formyltransferase</fullName>
        <ecNumber evidence="1">6.3.1.21</ecNumber>
    </recommendedName>
    <alternativeName>
        <fullName evidence="1">5'-phosphoribosylglycinamide transformylase 2</fullName>
    </alternativeName>
    <alternativeName>
        <fullName evidence="1">Formate-dependent GAR transformylase</fullName>
    </alternativeName>
    <alternativeName>
        <fullName evidence="1">GAR transformylase 2</fullName>
        <shortName evidence="1">GART 2</shortName>
    </alternativeName>
    <alternativeName>
        <fullName evidence="1">Non-folate glycinamide ribonucleotide transformylase</fullName>
    </alternativeName>
    <alternativeName>
        <fullName evidence="1">Phosphoribosylglycinamide formyltransferase 2</fullName>
    </alternativeName>
</protein>
<reference key="1">
    <citation type="journal article" date="2006" name="J. Bacteriol.">
        <title>Genome sequence of Aeromonas hydrophila ATCC 7966T: jack of all trades.</title>
        <authorList>
            <person name="Seshadri R."/>
            <person name="Joseph S.W."/>
            <person name="Chopra A.K."/>
            <person name="Sha J."/>
            <person name="Shaw J."/>
            <person name="Graf J."/>
            <person name="Haft D.H."/>
            <person name="Wu M."/>
            <person name="Ren Q."/>
            <person name="Rosovitz M.J."/>
            <person name="Madupu R."/>
            <person name="Tallon L."/>
            <person name="Kim M."/>
            <person name="Jin S."/>
            <person name="Vuong H."/>
            <person name="Stine O.C."/>
            <person name="Ali A."/>
            <person name="Horneman A.J."/>
            <person name="Heidelberg J.F."/>
        </authorList>
    </citation>
    <scope>NUCLEOTIDE SEQUENCE [LARGE SCALE GENOMIC DNA]</scope>
    <source>
        <strain>ATCC 7966 / DSM 30187 / BCRC 13018 / CCUG 14551 / JCM 1027 / KCTC 2358 / NCIMB 9240 / NCTC 8049</strain>
    </source>
</reference>
<name>PURT_AERHH</name>
<evidence type="ECO:0000255" key="1">
    <source>
        <dbReference type="HAMAP-Rule" id="MF_01643"/>
    </source>
</evidence>
<accession>A0KK42</accession>
<comment type="function">
    <text evidence="1">Involved in the de novo purine biosynthesis. Catalyzes the transfer of formate to 5-phospho-ribosyl-glycinamide (GAR), producing 5-phospho-ribosyl-N-formylglycinamide (FGAR). Formate is provided by PurU via hydrolysis of 10-formyl-tetrahydrofolate.</text>
</comment>
<comment type="catalytic activity">
    <reaction evidence="1">
        <text>N(1)-(5-phospho-beta-D-ribosyl)glycinamide + formate + ATP = N(2)-formyl-N(1)-(5-phospho-beta-D-ribosyl)glycinamide + ADP + phosphate + H(+)</text>
        <dbReference type="Rhea" id="RHEA:24829"/>
        <dbReference type="ChEBI" id="CHEBI:15378"/>
        <dbReference type="ChEBI" id="CHEBI:15740"/>
        <dbReference type="ChEBI" id="CHEBI:30616"/>
        <dbReference type="ChEBI" id="CHEBI:43474"/>
        <dbReference type="ChEBI" id="CHEBI:143788"/>
        <dbReference type="ChEBI" id="CHEBI:147286"/>
        <dbReference type="ChEBI" id="CHEBI:456216"/>
        <dbReference type="EC" id="6.3.1.21"/>
    </reaction>
    <physiologicalReaction direction="left-to-right" evidence="1">
        <dbReference type="Rhea" id="RHEA:24830"/>
    </physiologicalReaction>
</comment>
<comment type="pathway">
    <text evidence="1">Purine metabolism; IMP biosynthesis via de novo pathway; N(2)-formyl-N(1)-(5-phospho-D-ribosyl)glycinamide from N(1)-(5-phospho-D-ribosyl)glycinamide (formate route): step 1/1.</text>
</comment>
<comment type="subunit">
    <text evidence="1">Homodimer.</text>
</comment>
<comment type="similarity">
    <text evidence="1">Belongs to the PurK/PurT family.</text>
</comment>